<dbReference type="EMBL" id="AL591983">
    <property type="protein sequence ID" value="CAD00711.1"/>
    <property type="molecule type" value="Genomic_DNA"/>
</dbReference>
<dbReference type="PIR" id="AI1403">
    <property type="entry name" value="AI1403"/>
</dbReference>
<dbReference type="RefSeq" id="NP_466156.1">
    <property type="nucleotide sequence ID" value="NC_003210.1"/>
</dbReference>
<dbReference type="RefSeq" id="WP_003720954.1">
    <property type="nucleotide sequence ID" value="NZ_CP149495.1"/>
</dbReference>
<dbReference type="PDB" id="7NHN">
    <property type="method" value="EM"/>
    <property type="resolution" value="2.90 A"/>
    <property type="chains" value="k=1-102"/>
</dbReference>
<dbReference type="PDBsum" id="7NHN"/>
<dbReference type="EMDB" id="EMD-12334"/>
<dbReference type="SMR" id="P66330"/>
<dbReference type="STRING" id="169963.gene:17595351"/>
<dbReference type="PaxDb" id="169963-lmo2633"/>
<dbReference type="EnsemblBacteria" id="CAD00711">
    <property type="protein sequence ID" value="CAD00711"/>
    <property type="gene ID" value="CAD00711"/>
</dbReference>
<dbReference type="GeneID" id="93240514"/>
<dbReference type="GeneID" id="987179"/>
<dbReference type="KEGG" id="lmo:lmo2633"/>
<dbReference type="PATRIC" id="fig|169963.11.peg.2697"/>
<dbReference type="eggNOG" id="COG0051">
    <property type="taxonomic scope" value="Bacteria"/>
</dbReference>
<dbReference type="HOGENOM" id="CLU_122625_1_3_9"/>
<dbReference type="OrthoDB" id="9804464at2"/>
<dbReference type="PhylomeDB" id="P66330"/>
<dbReference type="BioCyc" id="LMON169963:LMO2633-MONOMER"/>
<dbReference type="Proteomes" id="UP000000817">
    <property type="component" value="Chromosome"/>
</dbReference>
<dbReference type="GO" id="GO:0015935">
    <property type="term" value="C:small ribosomal subunit"/>
    <property type="evidence" value="ECO:0000318"/>
    <property type="project" value="GO_Central"/>
</dbReference>
<dbReference type="GO" id="GO:0003735">
    <property type="term" value="F:structural constituent of ribosome"/>
    <property type="evidence" value="ECO:0000318"/>
    <property type="project" value="GO_Central"/>
</dbReference>
<dbReference type="GO" id="GO:0000049">
    <property type="term" value="F:tRNA binding"/>
    <property type="evidence" value="ECO:0007669"/>
    <property type="project" value="UniProtKB-UniRule"/>
</dbReference>
<dbReference type="GO" id="GO:0006412">
    <property type="term" value="P:translation"/>
    <property type="evidence" value="ECO:0007669"/>
    <property type="project" value="UniProtKB-UniRule"/>
</dbReference>
<dbReference type="FunFam" id="3.30.70.600:FF:000001">
    <property type="entry name" value="30S ribosomal protein S10"/>
    <property type="match status" value="1"/>
</dbReference>
<dbReference type="Gene3D" id="3.30.70.600">
    <property type="entry name" value="Ribosomal protein S10 domain"/>
    <property type="match status" value="1"/>
</dbReference>
<dbReference type="HAMAP" id="MF_00508">
    <property type="entry name" value="Ribosomal_uS10"/>
    <property type="match status" value="1"/>
</dbReference>
<dbReference type="InterPro" id="IPR001848">
    <property type="entry name" value="Ribosomal_uS10"/>
</dbReference>
<dbReference type="InterPro" id="IPR018268">
    <property type="entry name" value="Ribosomal_uS10_CS"/>
</dbReference>
<dbReference type="InterPro" id="IPR027486">
    <property type="entry name" value="Ribosomal_uS10_dom"/>
</dbReference>
<dbReference type="InterPro" id="IPR036838">
    <property type="entry name" value="Ribosomal_uS10_dom_sf"/>
</dbReference>
<dbReference type="NCBIfam" id="NF001861">
    <property type="entry name" value="PRK00596.1"/>
    <property type="match status" value="1"/>
</dbReference>
<dbReference type="NCBIfam" id="TIGR01049">
    <property type="entry name" value="rpsJ_bact"/>
    <property type="match status" value="1"/>
</dbReference>
<dbReference type="PANTHER" id="PTHR11700">
    <property type="entry name" value="30S RIBOSOMAL PROTEIN S10 FAMILY MEMBER"/>
    <property type="match status" value="1"/>
</dbReference>
<dbReference type="Pfam" id="PF00338">
    <property type="entry name" value="Ribosomal_S10"/>
    <property type="match status" value="1"/>
</dbReference>
<dbReference type="PRINTS" id="PR00971">
    <property type="entry name" value="RIBOSOMALS10"/>
</dbReference>
<dbReference type="SMART" id="SM01403">
    <property type="entry name" value="Ribosomal_S10"/>
    <property type="match status" value="1"/>
</dbReference>
<dbReference type="SUPFAM" id="SSF54999">
    <property type="entry name" value="Ribosomal protein S10"/>
    <property type="match status" value="1"/>
</dbReference>
<dbReference type="PROSITE" id="PS00361">
    <property type="entry name" value="RIBOSOMAL_S10"/>
    <property type="match status" value="1"/>
</dbReference>
<organism>
    <name type="scientific">Listeria monocytogenes serovar 1/2a (strain ATCC BAA-679 / EGD-e)</name>
    <dbReference type="NCBI Taxonomy" id="169963"/>
    <lineage>
        <taxon>Bacteria</taxon>
        <taxon>Bacillati</taxon>
        <taxon>Bacillota</taxon>
        <taxon>Bacilli</taxon>
        <taxon>Bacillales</taxon>
        <taxon>Listeriaceae</taxon>
        <taxon>Listeria</taxon>
    </lineage>
</organism>
<accession>P66330</accession>
<accession>Q927K6</accession>
<comment type="function">
    <text evidence="1">Involved in the binding of tRNA to the ribosomes.</text>
</comment>
<comment type="subunit">
    <text evidence="1">Part of the 30S ribosomal subunit.</text>
</comment>
<comment type="similarity">
    <text evidence="1">Belongs to the universal ribosomal protein uS10 family.</text>
</comment>
<reference key="1">
    <citation type="journal article" date="2001" name="Science">
        <title>Comparative genomics of Listeria species.</title>
        <authorList>
            <person name="Glaser P."/>
            <person name="Frangeul L."/>
            <person name="Buchrieser C."/>
            <person name="Rusniok C."/>
            <person name="Amend A."/>
            <person name="Baquero F."/>
            <person name="Berche P."/>
            <person name="Bloecker H."/>
            <person name="Brandt P."/>
            <person name="Chakraborty T."/>
            <person name="Charbit A."/>
            <person name="Chetouani F."/>
            <person name="Couve E."/>
            <person name="de Daruvar A."/>
            <person name="Dehoux P."/>
            <person name="Domann E."/>
            <person name="Dominguez-Bernal G."/>
            <person name="Duchaud E."/>
            <person name="Durant L."/>
            <person name="Dussurget O."/>
            <person name="Entian K.-D."/>
            <person name="Fsihi H."/>
            <person name="Garcia-del Portillo F."/>
            <person name="Garrido P."/>
            <person name="Gautier L."/>
            <person name="Goebel W."/>
            <person name="Gomez-Lopez N."/>
            <person name="Hain T."/>
            <person name="Hauf J."/>
            <person name="Jackson D."/>
            <person name="Jones L.-M."/>
            <person name="Kaerst U."/>
            <person name="Kreft J."/>
            <person name="Kuhn M."/>
            <person name="Kunst F."/>
            <person name="Kurapkat G."/>
            <person name="Madueno E."/>
            <person name="Maitournam A."/>
            <person name="Mata Vicente J."/>
            <person name="Ng E."/>
            <person name="Nedjari H."/>
            <person name="Nordsiek G."/>
            <person name="Novella S."/>
            <person name="de Pablos B."/>
            <person name="Perez-Diaz J.-C."/>
            <person name="Purcell R."/>
            <person name="Remmel B."/>
            <person name="Rose M."/>
            <person name="Schlueter T."/>
            <person name="Simoes N."/>
            <person name="Tierrez A."/>
            <person name="Vazquez-Boland J.-A."/>
            <person name="Voss H."/>
            <person name="Wehland J."/>
            <person name="Cossart P."/>
        </authorList>
    </citation>
    <scope>NUCLEOTIDE SEQUENCE [LARGE SCALE GENOMIC DNA]</scope>
    <source>
        <strain>ATCC BAA-679 / EGD-e</strain>
    </source>
</reference>
<name>RS10_LISMO</name>
<proteinExistence type="evidence at protein level"/>
<feature type="chain" id="PRO_0000146547" description="Small ribosomal subunit protein uS10">
    <location>
        <begin position="1"/>
        <end position="102"/>
    </location>
</feature>
<evidence type="ECO:0000255" key="1">
    <source>
        <dbReference type="HAMAP-Rule" id="MF_00508"/>
    </source>
</evidence>
<evidence type="ECO:0000305" key="2"/>
<gene>
    <name evidence="1" type="primary">rpsJ</name>
    <name type="ordered locus">lmo2633</name>
</gene>
<sequence length="102" mass="11682">MAKQKIRIRLKAYDHRILDQSAEKIVETAKRSGASVSGPIPLPTEKSIYTVLRAVHKYKDSREQFEMRTHKRLIDIVNPTPQTVDSLMRLDLPSGVDIEIKL</sequence>
<keyword id="KW-0002">3D-structure</keyword>
<keyword id="KW-1185">Reference proteome</keyword>
<keyword id="KW-0687">Ribonucleoprotein</keyword>
<keyword id="KW-0689">Ribosomal protein</keyword>
<protein>
    <recommendedName>
        <fullName evidence="1">Small ribosomal subunit protein uS10</fullName>
    </recommendedName>
    <alternativeName>
        <fullName evidence="2">30S ribosomal protein S10</fullName>
    </alternativeName>
</protein>